<dbReference type="EC" id="5.2.1.8" evidence="2 3"/>
<dbReference type="EMBL" id="U31077">
    <property type="protein sequence ID" value="AAC47129.1"/>
    <property type="molecule type" value="mRNA"/>
</dbReference>
<dbReference type="EMBL" id="AL032663">
    <property type="protein sequence ID" value="CAA21762.1"/>
    <property type="molecule type" value="Genomic_DNA"/>
</dbReference>
<dbReference type="PIR" id="T27373">
    <property type="entry name" value="T27373"/>
</dbReference>
<dbReference type="RefSeq" id="NP_506751.1">
    <property type="nucleotide sequence ID" value="NM_074350.9"/>
</dbReference>
<dbReference type="PDB" id="1DYW">
    <property type="method" value="X-ray"/>
    <property type="resolution" value="1.80 A"/>
    <property type="chains" value="A=1-173"/>
</dbReference>
<dbReference type="PDB" id="1E3B">
    <property type="method" value="X-ray"/>
    <property type="resolution" value="1.85 A"/>
    <property type="chains" value="A=1-173"/>
</dbReference>
<dbReference type="PDB" id="1E8K">
    <property type="method" value="X-ray"/>
    <property type="resolution" value="1.90 A"/>
    <property type="chains" value="A=1-173"/>
</dbReference>
<dbReference type="PDB" id="2IGV">
    <property type="method" value="X-ray"/>
    <property type="resolution" value="1.67 A"/>
    <property type="chains" value="A=1-173"/>
</dbReference>
<dbReference type="PDB" id="2IGW">
    <property type="method" value="X-ray"/>
    <property type="resolution" value="1.78 A"/>
    <property type="chains" value="A=1-173"/>
</dbReference>
<dbReference type="PDBsum" id="1DYW"/>
<dbReference type="PDBsum" id="1E3B"/>
<dbReference type="PDBsum" id="1E8K"/>
<dbReference type="PDBsum" id="2IGV"/>
<dbReference type="PDBsum" id="2IGW"/>
<dbReference type="SMR" id="P52011"/>
<dbReference type="BioGRID" id="45023">
    <property type="interactions" value="61"/>
</dbReference>
<dbReference type="FunCoup" id="P52011">
    <property type="interactions" value="1371"/>
</dbReference>
<dbReference type="IntAct" id="P52011">
    <property type="interactions" value="1"/>
</dbReference>
<dbReference type="STRING" id="6239.Y75B12B.5.1"/>
<dbReference type="PaxDb" id="6239-Y75B12B.5"/>
<dbReference type="PeptideAtlas" id="P52011"/>
<dbReference type="EnsemblMetazoa" id="Y75B12B.5.1">
    <property type="protein sequence ID" value="Y75B12B.5.1"/>
    <property type="gene ID" value="WBGene00000879"/>
</dbReference>
<dbReference type="GeneID" id="180028"/>
<dbReference type="KEGG" id="cel:CELE_Y75B12B.5"/>
<dbReference type="UCSC" id="Y75B12B.5.1">
    <property type="organism name" value="c. elegans"/>
</dbReference>
<dbReference type="AGR" id="WB:WBGene00000879"/>
<dbReference type="CTD" id="180028"/>
<dbReference type="WormBase" id="Y75B12B.5">
    <property type="protein sequence ID" value="CE20374"/>
    <property type="gene ID" value="WBGene00000879"/>
    <property type="gene designation" value="cyn-3"/>
</dbReference>
<dbReference type="eggNOG" id="KOG0865">
    <property type="taxonomic scope" value="Eukaryota"/>
</dbReference>
<dbReference type="GeneTree" id="ENSGT00940000168914"/>
<dbReference type="HOGENOM" id="CLU_012062_4_2_1"/>
<dbReference type="InParanoid" id="P52011"/>
<dbReference type="OMA" id="ENFKRTH"/>
<dbReference type="OrthoDB" id="193499at2759"/>
<dbReference type="PhylomeDB" id="P52011"/>
<dbReference type="EvolutionaryTrace" id="P52011"/>
<dbReference type="PRO" id="PR:P52011"/>
<dbReference type="Proteomes" id="UP000001940">
    <property type="component" value="Chromosome V"/>
</dbReference>
<dbReference type="Bgee" id="WBGene00000879">
    <property type="expression patterns" value="Expressed in germ line (C elegans) and 4 other cell types or tissues"/>
</dbReference>
<dbReference type="GO" id="GO:0005737">
    <property type="term" value="C:cytoplasm"/>
    <property type="evidence" value="ECO:0000318"/>
    <property type="project" value="GO_Central"/>
</dbReference>
<dbReference type="GO" id="GO:0016018">
    <property type="term" value="F:cyclosporin A binding"/>
    <property type="evidence" value="ECO:0000318"/>
    <property type="project" value="GO_Central"/>
</dbReference>
<dbReference type="GO" id="GO:0003755">
    <property type="term" value="F:peptidyl-prolyl cis-trans isomerase activity"/>
    <property type="evidence" value="ECO:0000314"/>
    <property type="project" value="WormBase"/>
</dbReference>
<dbReference type="GO" id="GO:0006457">
    <property type="term" value="P:protein folding"/>
    <property type="evidence" value="ECO:0000250"/>
    <property type="project" value="WormBase"/>
</dbReference>
<dbReference type="CDD" id="cd01926">
    <property type="entry name" value="cyclophilin_ABH_like"/>
    <property type="match status" value="1"/>
</dbReference>
<dbReference type="FunFam" id="2.40.100.10:FF:000002">
    <property type="entry name" value="Peptidyl-prolyl cis-trans isomerase"/>
    <property type="match status" value="1"/>
</dbReference>
<dbReference type="Gene3D" id="2.40.100.10">
    <property type="entry name" value="Cyclophilin-like"/>
    <property type="match status" value="1"/>
</dbReference>
<dbReference type="InterPro" id="IPR029000">
    <property type="entry name" value="Cyclophilin-like_dom_sf"/>
</dbReference>
<dbReference type="InterPro" id="IPR024936">
    <property type="entry name" value="Cyclophilin-type_PPIase"/>
</dbReference>
<dbReference type="InterPro" id="IPR020892">
    <property type="entry name" value="Cyclophilin-type_PPIase_CS"/>
</dbReference>
<dbReference type="InterPro" id="IPR002130">
    <property type="entry name" value="Cyclophilin-type_PPIase_dom"/>
</dbReference>
<dbReference type="PANTHER" id="PTHR11071">
    <property type="entry name" value="PEPTIDYL-PROLYL CIS-TRANS ISOMERASE"/>
    <property type="match status" value="1"/>
</dbReference>
<dbReference type="PANTHER" id="PTHR11071:SF561">
    <property type="entry name" value="PEPTIDYL-PROLYL CIS-TRANS ISOMERASE D-RELATED"/>
    <property type="match status" value="1"/>
</dbReference>
<dbReference type="Pfam" id="PF00160">
    <property type="entry name" value="Pro_isomerase"/>
    <property type="match status" value="1"/>
</dbReference>
<dbReference type="PIRSF" id="PIRSF001467">
    <property type="entry name" value="Peptidylpro_ismrse"/>
    <property type="match status" value="1"/>
</dbReference>
<dbReference type="PRINTS" id="PR00153">
    <property type="entry name" value="CSAPPISMRASE"/>
</dbReference>
<dbReference type="SUPFAM" id="SSF50891">
    <property type="entry name" value="Cyclophilin-like"/>
    <property type="match status" value="1"/>
</dbReference>
<dbReference type="PROSITE" id="PS00170">
    <property type="entry name" value="CSA_PPIASE_1"/>
    <property type="match status" value="1"/>
</dbReference>
<dbReference type="PROSITE" id="PS50072">
    <property type="entry name" value="CSA_PPIASE_2"/>
    <property type="match status" value="1"/>
</dbReference>
<keyword id="KW-0002">3D-structure</keyword>
<keyword id="KW-0413">Isomerase</keyword>
<keyword id="KW-1185">Reference proteome</keyword>
<keyword id="KW-0697">Rotamase</keyword>
<protein>
    <recommendedName>
        <fullName>Peptidyl-prolyl cis-trans isomerase 3</fullName>
        <shortName>PPIase 3</shortName>
        <ecNumber evidence="2 3">5.2.1.8</ecNumber>
    </recommendedName>
    <alternativeName>
        <fullName evidence="4">Cyclophilin-3</fullName>
        <shortName evidence="4 5">CYP-3</shortName>
    </alternativeName>
    <alternativeName>
        <fullName>Rotamase 3</fullName>
    </alternativeName>
</protein>
<gene>
    <name type="primary">cyn-3</name>
    <name type="synonym">cyp-3</name>
    <name type="ORF">Y75B12B.5</name>
</gene>
<name>CYP3_CAEEL</name>
<sequence>MSRSKVFFDITIGGKASGRIVMELYDDVVPKTAGNFRALCTGENGIGKSGKPLHFKGSKFHRIIPNFMIQGGDFTRGNGTGGESIYGEKFPDENFKEKHTGPGVLSMANAGPNTNGSQFFLCTVKTEWLDGKHVVFGRVVEGLDVVKAVESNGSQSGKPVKDCMIADCGQLKA</sequence>
<evidence type="ECO:0000255" key="1">
    <source>
        <dbReference type="PROSITE-ProRule" id="PRU00156"/>
    </source>
</evidence>
<evidence type="ECO:0000269" key="2">
    <source>
    </source>
</evidence>
<evidence type="ECO:0000269" key="3">
    <source>
    </source>
</evidence>
<evidence type="ECO:0000303" key="4">
    <source>
    </source>
</evidence>
<evidence type="ECO:0000303" key="5">
    <source>
    </source>
</evidence>
<evidence type="ECO:0000305" key="6"/>
<evidence type="ECO:0007829" key="7">
    <source>
        <dbReference type="PDB" id="2IGV"/>
    </source>
</evidence>
<organism>
    <name type="scientific">Caenorhabditis elegans</name>
    <dbReference type="NCBI Taxonomy" id="6239"/>
    <lineage>
        <taxon>Eukaryota</taxon>
        <taxon>Metazoa</taxon>
        <taxon>Ecdysozoa</taxon>
        <taxon>Nematoda</taxon>
        <taxon>Chromadorea</taxon>
        <taxon>Rhabditida</taxon>
        <taxon>Rhabditina</taxon>
        <taxon>Rhabditomorpha</taxon>
        <taxon>Rhabditoidea</taxon>
        <taxon>Rhabditidae</taxon>
        <taxon>Peloderinae</taxon>
        <taxon>Caenorhabditis</taxon>
    </lineage>
</organism>
<accession>P52011</accession>
<proteinExistence type="evidence at protein level"/>
<comment type="function">
    <text evidence="2 3 4 5">Catalyzes the cis-trans isomerization of proline imidic peptide bonds in oligopeptides (PubMed:10574961, PubMed:8694762). Plays a role in protein folding, transport and assembly (PubMed:10574961, PubMed:8694762).</text>
</comment>
<comment type="catalytic activity">
    <reaction evidence="2 3">
        <text>[protein]-peptidylproline (omega=180) = [protein]-peptidylproline (omega=0)</text>
        <dbReference type="Rhea" id="RHEA:16237"/>
        <dbReference type="Rhea" id="RHEA-COMP:10747"/>
        <dbReference type="Rhea" id="RHEA-COMP:10748"/>
        <dbReference type="ChEBI" id="CHEBI:83833"/>
        <dbReference type="ChEBI" id="CHEBI:83834"/>
        <dbReference type="EC" id="5.2.1.8"/>
    </reaction>
    <physiologicalReaction direction="right-to-left" evidence="2 3">
        <dbReference type="Rhea" id="RHEA:16239"/>
    </physiologicalReaction>
</comment>
<comment type="interaction">
    <interactant intactId="EBI-2419150">
        <id>P52011</id>
    </interactant>
    <interactant intactId="EBI-2419154">
        <id>Q9NAP8</id>
        <label>CELE_K09E4.1</label>
    </interactant>
    <organismsDiffer>false</organismsDiffer>
    <experiments>4</experiments>
</comment>
<comment type="tissue specificity">
    <text evidence="2">Exclusively expressed in the single anterior excretory cell.</text>
</comment>
<comment type="developmental stage">
    <text evidence="2">During early larval development, peaking at the second larval stage, and dropping off in later development.</text>
</comment>
<comment type="similarity">
    <text evidence="6">Belongs to the cyclophilin-type PPIase family.</text>
</comment>
<reference key="1">
    <citation type="journal article" date="1996" name="Biochem. J.">
        <title>Cloning and biochemical characterization of the cyclophilin homologues from the free-living nematode Caenorhabditis elegans.</title>
        <authorList>
            <person name="Page A.P."/>
            <person name="Macniven K."/>
            <person name="Hengartner M.O."/>
        </authorList>
    </citation>
    <scope>NUCLEOTIDE SEQUENCE [MRNA]</scope>
    <scope>FUNCTION</scope>
    <scope>CATALYTIC ACTIVITY</scope>
    <source>
        <strain>Bristol N2</strain>
    </source>
</reference>
<reference key="2">
    <citation type="journal article" date="1998" name="Science">
        <title>Genome sequence of the nematode C. elegans: a platform for investigating biology.</title>
        <authorList>
            <consortium name="The C. elegans sequencing consortium"/>
        </authorList>
    </citation>
    <scope>NUCLEOTIDE SEQUENCE [LARGE SCALE GENOMIC DNA]</scope>
    <source>
        <strain>Bristol N2</strain>
    </source>
</reference>
<reference key="3">
    <citation type="journal article" date="1999" name="J. Biol. Chem.">
        <title>Biochemical and structural characterization of a divergent loop cyclophilin from Caenorhabditis elegans.</title>
        <authorList>
            <person name="Dornan J."/>
            <person name="Page A.P."/>
            <person name="Taylor P."/>
            <person name="Wu S."/>
            <person name="Winter A.D."/>
            <person name="Husi H."/>
            <person name="Walkinshaw M.D."/>
        </authorList>
    </citation>
    <scope>X-RAY CRYSTALLOGRAPHY (1.8 ANGSTROMS)</scope>
    <scope>TISSUE SPECIFICITY</scope>
    <scope>DEVELOPMENTAL STAGE</scope>
</reference>
<reference key="4">
    <citation type="journal article" date="2000" name="Angew. Chem. Int. Ed.">
        <title>First crystal structure of a medicinally relevant gold protein complex: unexpected binding of [Au(PEt3)]+ to histidine.</title>
        <authorList>
            <person name="Zou J."/>
            <person name="Taylor P."/>
            <person name="Dornan J."/>
            <person name="Robinson S.P."/>
            <person name="Walkinshaw M.D."/>
            <person name="Sadler P.J."/>
        </authorList>
    </citation>
    <scope>X-RAY CRYSTALLOGRAPHY (1.85 ANGSTROMS) IN A COMPLEX WITH GOLD</scope>
</reference>
<feature type="chain" id="PRO_0000064192" description="Peptidyl-prolyl cis-trans isomerase 3">
    <location>
        <begin position="1"/>
        <end position="173"/>
    </location>
</feature>
<feature type="domain" description="PPIase cyclophilin-type" evidence="1">
    <location>
        <begin position="7"/>
        <end position="170"/>
    </location>
</feature>
<feature type="strand" evidence="7">
    <location>
        <begin position="5"/>
        <end position="12"/>
    </location>
</feature>
<feature type="strand" evidence="7">
    <location>
        <begin position="15"/>
        <end position="24"/>
    </location>
</feature>
<feature type="turn" evidence="7">
    <location>
        <begin position="26"/>
        <end position="28"/>
    </location>
</feature>
<feature type="helix" evidence="7">
    <location>
        <begin position="30"/>
        <end position="41"/>
    </location>
</feature>
<feature type="turn" evidence="7">
    <location>
        <begin position="42"/>
        <end position="44"/>
    </location>
</feature>
<feature type="strand" evidence="7">
    <location>
        <begin position="50"/>
        <end position="53"/>
    </location>
</feature>
<feature type="strand" evidence="7">
    <location>
        <begin position="62"/>
        <end position="64"/>
    </location>
</feature>
<feature type="turn" evidence="7">
    <location>
        <begin position="65"/>
        <end position="67"/>
    </location>
</feature>
<feature type="strand" evidence="7">
    <location>
        <begin position="68"/>
        <end position="71"/>
    </location>
</feature>
<feature type="turn" evidence="7">
    <location>
        <begin position="74"/>
        <end position="76"/>
    </location>
</feature>
<feature type="strand" evidence="7">
    <location>
        <begin position="77"/>
        <end position="80"/>
    </location>
</feature>
<feature type="strand" evidence="7">
    <location>
        <begin position="104"/>
        <end position="107"/>
    </location>
</feature>
<feature type="strand" evidence="7">
    <location>
        <begin position="115"/>
        <end position="117"/>
    </location>
</feature>
<feature type="strand" evidence="7">
    <location>
        <begin position="119"/>
        <end position="124"/>
    </location>
</feature>
<feature type="helix" evidence="7">
    <location>
        <begin position="127"/>
        <end position="129"/>
    </location>
</feature>
<feature type="turn" evidence="7">
    <location>
        <begin position="130"/>
        <end position="132"/>
    </location>
</feature>
<feature type="strand" evidence="7">
    <location>
        <begin position="135"/>
        <end position="141"/>
    </location>
</feature>
<feature type="helix" evidence="7">
    <location>
        <begin position="143"/>
        <end position="150"/>
    </location>
</feature>
<feature type="strand" evidence="7">
    <location>
        <begin position="163"/>
        <end position="171"/>
    </location>
</feature>